<organism>
    <name type="scientific">Californiconus californicus</name>
    <name type="common">California cone</name>
    <name type="synonym">Conus californicus</name>
    <dbReference type="NCBI Taxonomy" id="1736779"/>
    <lineage>
        <taxon>Eukaryota</taxon>
        <taxon>Metazoa</taxon>
        <taxon>Spiralia</taxon>
        <taxon>Lophotrochozoa</taxon>
        <taxon>Mollusca</taxon>
        <taxon>Gastropoda</taxon>
        <taxon>Caenogastropoda</taxon>
        <taxon>Neogastropoda</taxon>
        <taxon>Conoidea</taxon>
        <taxon>Conidae</taxon>
        <taxon>Californiconus</taxon>
    </lineage>
</organism>
<comment type="function">
    <text evidence="3">Probable neurotoxin.</text>
</comment>
<comment type="subcellular location">
    <subcellularLocation>
        <location evidence="4">Secreted</location>
    </subcellularLocation>
</comment>
<comment type="tissue specificity">
    <text evidence="4">Expressed by the venom duct.</text>
</comment>
<comment type="domain">
    <text evidence="3">The cysteine framework is C-C-CCC-C-C-C.</text>
</comment>
<comment type="PTM">
    <text evidence="3">May contain 4 disulfide bonds.</text>
</comment>
<comment type="caution">
    <text evidence="3 4">Authors numbered this protein framework XXVII. Unfortunately, this number is already attributed to another Cys arrangment (C-CC-C-C-C). As a consequence, it has been renamed conotoxin GeXXVIIIA.</text>
</comment>
<evidence type="ECO:0000255" key="1"/>
<evidence type="ECO:0000303" key="2">
    <source>
    </source>
</evidence>
<evidence type="ECO:0000305" key="3"/>
<evidence type="ECO:0000305" key="4">
    <source>
    </source>
</evidence>
<protein>
    <recommendedName>
        <fullName evidence="3">Conotoxin Cal27</fullName>
    </recommendedName>
    <alternativeName>
        <fullName evidence="2">O3_cal27</fullName>
    </alternativeName>
</protein>
<reference key="1">
    <citation type="journal article" date="2019" name="Toxins">
        <title>The diversified O-superfamily in Californiconus californicus presents a conotoxin with antimycobacterial activity.</title>
        <authorList>
            <person name="Bernaldez-Sarabia J."/>
            <person name="Figueroa-Montiel A."/>
            <person name="Duenas S."/>
            <person name="Cervantes-Luevano K."/>
            <person name="Beltran J.A."/>
            <person name="Ortiz E."/>
            <person name="Jimenez S."/>
            <person name="Possani L.D."/>
            <person name="Paniagua-Solis J.F."/>
            <person name="Gonzalez-Canudas J."/>
            <person name="Licea-Navarro A."/>
        </authorList>
    </citation>
    <scope>NUCLEOTIDE SEQUENCE [MRNA]</scope>
    <source>
        <tissue>Venom duct</tissue>
    </source>
</reference>
<sequence length="74" mass="7543">MSGTGVLLLTLLLLVAMAASDMLSSLIQAHERDSEESCKSYGGGPCPSGEDCCCPPGRSTGTCKRTCNNGSVCA</sequence>
<feature type="signal peptide" evidence="1">
    <location>
        <begin position="1"/>
        <end position="19"/>
    </location>
</feature>
<feature type="chain" id="PRO_0000450958" description="Conotoxin Cal27" evidence="3">
    <location>
        <begin position="20"/>
        <end position="74"/>
    </location>
</feature>
<accession>P0DTX6</accession>
<dbReference type="GO" id="GO:0005576">
    <property type="term" value="C:extracellular region"/>
    <property type="evidence" value="ECO:0007669"/>
    <property type="project" value="UniProtKB-SubCell"/>
</dbReference>
<dbReference type="GO" id="GO:0090729">
    <property type="term" value="F:toxin activity"/>
    <property type="evidence" value="ECO:0007669"/>
    <property type="project" value="UniProtKB-KW"/>
</dbReference>
<keyword id="KW-1015">Disulfide bond</keyword>
<keyword id="KW-0528">Neurotoxin</keyword>
<keyword id="KW-0964">Secreted</keyword>
<keyword id="KW-0732">Signal</keyword>
<keyword id="KW-0800">Toxin</keyword>
<name>C27_CONCL</name>
<proteinExistence type="inferred from homology"/>